<dbReference type="EC" id="6.3.4.4" evidence="1"/>
<dbReference type="EMBL" id="CP000947">
    <property type="protein sequence ID" value="ACA31917.1"/>
    <property type="molecule type" value="Genomic_DNA"/>
</dbReference>
<dbReference type="RefSeq" id="WP_012341154.1">
    <property type="nucleotide sequence ID" value="NC_010519.1"/>
</dbReference>
<dbReference type="SMR" id="B0UW92"/>
<dbReference type="STRING" id="228400.HSM_0287"/>
<dbReference type="GeneID" id="31486569"/>
<dbReference type="KEGG" id="hsm:HSM_0287"/>
<dbReference type="HOGENOM" id="CLU_029848_0_0_6"/>
<dbReference type="UniPathway" id="UPA00075">
    <property type="reaction ID" value="UER00335"/>
</dbReference>
<dbReference type="GO" id="GO:0005737">
    <property type="term" value="C:cytoplasm"/>
    <property type="evidence" value="ECO:0007669"/>
    <property type="project" value="UniProtKB-SubCell"/>
</dbReference>
<dbReference type="GO" id="GO:0004019">
    <property type="term" value="F:adenylosuccinate synthase activity"/>
    <property type="evidence" value="ECO:0007669"/>
    <property type="project" value="UniProtKB-UniRule"/>
</dbReference>
<dbReference type="GO" id="GO:0005525">
    <property type="term" value="F:GTP binding"/>
    <property type="evidence" value="ECO:0007669"/>
    <property type="project" value="UniProtKB-UniRule"/>
</dbReference>
<dbReference type="GO" id="GO:0000287">
    <property type="term" value="F:magnesium ion binding"/>
    <property type="evidence" value="ECO:0007669"/>
    <property type="project" value="UniProtKB-UniRule"/>
</dbReference>
<dbReference type="GO" id="GO:0044208">
    <property type="term" value="P:'de novo' AMP biosynthetic process"/>
    <property type="evidence" value="ECO:0007669"/>
    <property type="project" value="UniProtKB-UniRule"/>
</dbReference>
<dbReference type="GO" id="GO:0046040">
    <property type="term" value="P:IMP metabolic process"/>
    <property type="evidence" value="ECO:0007669"/>
    <property type="project" value="TreeGrafter"/>
</dbReference>
<dbReference type="CDD" id="cd03108">
    <property type="entry name" value="AdSS"/>
    <property type="match status" value="1"/>
</dbReference>
<dbReference type="FunFam" id="1.10.300.10:FF:000001">
    <property type="entry name" value="Adenylosuccinate synthetase"/>
    <property type="match status" value="1"/>
</dbReference>
<dbReference type="FunFam" id="3.90.170.10:FF:000001">
    <property type="entry name" value="Adenylosuccinate synthetase"/>
    <property type="match status" value="1"/>
</dbReference>
<dbReference type="Gene3D" id="3.40.440.10">
    <property type="entry name" value="Adenylosuccinate Synthetase, subunit A, domain 1"/>
    <property type="match status" value="1"/>
</dbReference>
<dbReference type="Gene3D" id="1.10.300.10">
    <property type="entry name" value="Adenylosuccinate Synthetase, subunit A, domain 2"/>
    <property type="match status" value="1"/>
</dbReference>
<dbReference type="Gene3D" id="3.90.170.10">
    <property type="entry name" value="Adenylosuccinate Synthetase, subunit A, domain 3"/>
    <property type="match status" value="1"/>
</dbReference>
<dbReference type="HAMAP" id="MF_00011">
    <property type="entry name" value="Adenylosucc_synth"/>
    <property type="match status" value="1"/>
</dbReference>
<dbReference type="InterPro" id="IPR018220">
    <property type="entry name" value="Adenylosuccin_syn_GTP-bd"/>
</dbReference>
<dbReference type="InterPro" id="IPR033128">
    <property type="entry name" value="Adenylosuccin_syn_Lys_AS"/>
</dbReference>
<dbReference type="InterPro" id="IPR042109">
    <property type="entry name" value="Adenylosuccinate_synth_dom1"/>
</dbReference>
<dbReference type="InterPro" id="IPR042110">
    <property type="entry name" value="Adenylosuccinate_synth_dom2"/>
</dbReference>
<dbReference type="InterPro" id="IPR042111">
    <property type="entry name" value="Adenylosuccinate_synth_dom3"/>
</dbReference>
<dbReference type="InterPro" id="IPR001114">
    <property type="entry name" value="Adenylosuccinate_synthetase"/>
</dbReference>
<dbReference type="InterPro" id="IPR027417">
    <property type="entry name" value="P-loop_NTPase"/>
</dbReference>
<dbReference type="NCBIfam" id="NF002223">
    <property type="entry name" value="PRK01117.1"/>
    <property type="match status" value="1"/>
</dbReference>
<dbReference type="NCBIfam" id="TIGR00184">
    <property type="entry name" value="purA"/>
    <property type="match status" value="1"/>
</dbReference>
<dbReference type="PANTHER" id="PTHR11846">
    <property type="entry name" value="ADENYLOSUCCINATE SYNTHETASE"/>
    <property type="match status" value="1"/>
</dbReference>
<dbReference type="PANTHER" id="PTHR11846:SF0">
    <property type="entry name" value="ADENYLOSUCCINATE SYNTHETASE"/>
    <property type="match status" value="1"/>
</dbReference>
<dbReference type="Pfam" id="PF00709">
    <property type="entry name" value="Adenylsucc_synt"/>
    <property type="match status" value="1"/>
</dbReference>
<dbReference type="SMART" id="SM00788">
    <property type="entry name" value="Adenylsucc_synt"/>
    <property type="match status" value="1"/>
</dbReference>
<dbReference type="SUPFAM" id="SSF52540">
    <property type="entry name" value="P-loop containing nucleoside triphosphate hydrolases"/>
    <property type="match status" value="1"/>
</dbReference>
<dbReference type="PROSITE" id="PS01266">
    <property type="entry name" value="ADENYLOSUCCIN_SYN_1"/>
    <property type="match status" value="1"/>
</dbReference>
<dbReference type="PROSITE" id="PS00513">
    <property type="entry name" value="ADENYLOSUCCIN_SYN_2"/>
    <property type="match status" value="1"/>
</dbReference>
<evidence type="ECO:0000255" key="1">
    <source>
        <dbReference type="HAMAP-Rule" id="MF_00011"/>
    </source>
</evidence>
<protein>
    <recommendedName>
        <fullName evidence="1">Adenylosuccinate synthetase</fullName>
        <shortName evidence="1">AMPSase</shortName>
        <shortName evidence="1">AdSS</shortName>
        <ecNumber evidence="1">6.3.4.4</ecNumber>
    </recommendedName>
    <alternativeName>
        <fullName evidence="1">IMP--aspartate ligase</fullName>
    </alternativeName>
</protein>
<feature type="chain" id="PRO_1000073949" description="Adenylosuccinate synthetase">
    <location>
        <begin position="1"/>
        <end position="432"/>
    </location>
</feature>
<feature type="active site" description="Proton acceptor" evidence="1">
    <location>
        <position position="14"/>
    </location>
</feature>
<feature type="active site" description="Proton donor" evidence="1">
    <location>
        <position position="42"/>
    </location>
</feature>
<feature type="binding site" evidence="1">
    <location>
        <begin position="13"/>
        <end position="19"/>
    </location>
    <ligand>
        <name>GTP</name>
        <dbReference type="ChEBI" id="CHEBI:37565"/>
    </ligand>
</feature>
<feature type="binding site" description="in other chain" evidence="1">
    <location>
        <begin position="14"/>
        <end position="17"/>
    </location>
    <ligand>
        <name>IMP</name>
        <dbReference type="ChEBI" id="CHEBI:58053"/>
        <note>ligand shared between dimeric partners</note>
    </ligand>
</feature>
<feature type="binding site" evidence="1">
    <location>
        <position position="14"/>
    </location>
    <ligand>
        <name>Mg(2+)</name>
        <dbReference type="ChEBI" id="CHEBI:18420"/>
    </ligand>
</feature>
<feature type="binding site" description="in other chain" evidence="1">
    <location>
        <begin position="39"/>
        <end position="42"/>
    </location>
    <ligand>
        <name>IMP</name>
        <dbReference type="ChEBI" id="CHEBI:58053"/>
        <note>ligand shared between dimeric partners</note>
    </ligand>
</feature>
<feature type="binding site" evidence="1">
    <location>
        <begin position="41"/>
        <end position="43"/>
    </location>
    <ligand>
        <name>GTP</name>
        <dbReference type="ChEBI" id="CHEBI:37565"/>
    </ligand>
</feature>
<feature type="binding site" evidence="1">
    <location>
        <position position="41"/>
    </location>
    <ligand>
        <name>Mg(2+)</name>
        <dbReference type="ChEBI" id="CHEBI:18420"/>
    </ligand>
</feature>
<feature type="binding site" description="in other chain" evidence="1">
    <location>
        <position position="130"/>
    </location>
    <ligand>
        <name>IMP</name>
        <dbReference type="ChEBI" id="CHEBI:58053"/>
        <note>ligand shared between dimeric partners</note>
    </ligand>
</feature>
<feature type="binding site" evidence="1">
    <location>
        <position position="144"/>
    </location>
    <ligand>
        <name>IMP</name>
        <dbReference type="ChEBI" id="CHEBI:58053"/>
        <note>ligand shared between dimeric partners</note>
    </ligand>
</feature>
<feature type="binding site" description="in other chain" evidence="1">
    <location>
        <position position="225"/>
    </location>
    <ligand>
        <name>IMP</name>
        <dbReference type="ChEBI" id="CHEBI:58053"/>
        <note>ligand shared between dimeric partners</note>
    </ligand>
</feature>
<feature type="binding site" description="in other chain" evidence="1">
    <location>
        <position position="240"/>
    </location>
    <ligand>
        <name>IMP</name>
        <dbReference type="ChEBI" id="CHEBI:58053"/>
        <note>ligand shared between dimeric partners</note>
    </ligand>
</feature>
<feature type="binding site" evidence="1">
    <location>
        <begin position="300"/>
        <end position="306"/>
    </location>
    <ligand>
        <name>substrate</name>
    </ligand>
</feature>
<feature type="binding site" description="in other chain" evidence="1">
    <location>
        <position position="304"/>
    </location>
    <ligand>
        <name>IMP</name>
        <dbReference type="ChEBI" id="CHEBI:58053"/>
        <note>ligand shared between dimeric partners</note>
    </ligand>
</feature>
<feature type="binding site" evidence="1">
    <location>
        <position position="306"/>
    </location>
    <ligand>
        <name>GTP</name>
        <dbReference type="ChEBI" id="CHEBI:37565"/>
    </ligand>
</feature>
<feature type="binding site" evidence="1">
    <location>
        <begin position="332"/>
        <end position="334"/>
    </location>
    <ligand>
        <name>GTP</name>
        <dbReference type="ChEBI" id="CHEBI:37565"/>
    </ligand>
</feature>
<feature type="binding site" evidence="1">
    <location>
        <begin position="415"/>
        <end position="417"/>
    </location>
    <ligand>
        <name>GTP</name>
        <dbReference type="ChEBI" id="CHEBI:37565"/>
    </ligand>
</feature>
<gene>
    <name evidence="1" type="primary">purA</name>
    <name type="ordered locus">HSM_0287</name>
</gene>
<name>PURA_HISS2</name>
<accession>B0UW92</accession>
<sequence>MGKSVVVLGAQWGDEGKGKIVDLLTDRVKYVVRYQGGHNAGHTLIINGEKTVLRLIPSGILRENVTCLIGNGVVLSPTALMQEMGELESRGINVRERLLISEACPLILPYHVAMDKARESALGNKAIGTTGRGIGPAYEDKVARRGLRVGDLFDKQSFAEKLKNILDYYNFQLVNYYKVEAVDYQKTLDEVLAVADIITAMVADVTTILDVARKNGDNILFEGAQGTMLDIDQGTYPYVTSSNTTAGGVSTGAGFGPRHIDYVLGIIKAYCTRVGGGPFTTELFDEVGAEIARKGNEFGAVTGRPRRCGWFDAVAIKRAIQTNSISGFCMTKLDVLDGFREVKICVGYKMPNGEIAEYAPLAAKDWEGVEPIYETLPGWQENTFGITDVNQLPENTRNYIKRIEEVTGVPIAILSTGPDRVETMILNDPFAV</sequence>
<organism>
    <name type="scientific">Histophilus somni (strain 2336)</name>
    <name type="common">Haemophilus somnus</name>
    <dbReference type="NCBI Taxonomy" id="228400"/>
    <lineage>
        <taxon>Bacteria</taxon>
        <taxon>Pseudomonadati</taxon>
        <taxon>Pseudomonadota</taxon>
        <taxon>Gammaproteobacteria</taxon>
        <taxon>Pasteurellales</taxon>
        <taxon>Pasteurellaceae</taxon>
        <taxon>Histophilus</taxon>
    </lineage>
</organism>
<keyword id="KW-0963">Cytoplasm</keyword>
<keyword id="KW-0342">GTP-binding</keyword>
<keyword id="KW-0436">Ligase</keyword>
<keyword id="KW-0460">Magnesium</keyword>
<keyword id="KW-0479">Metal-binding</keyword>
<keyword id="KW-0547">Nucleotide-binding</keyword>
<keyword id="KW-0658">Purine biosynthesis</keyword>
<proteinExistence type="inferred from homology"/>
<comment type="function">
    <text evidence="1">Plays an important role in the de novo pathway of purine nucleotide biosynthesis. Catalyzes the first committed step in the biosynthesis of AMP from IMP.</text>
</comment>
<comment type="catalytic activity">
    <reaction evidence="1">
        <text>IMP + L-aspartate + GTP = N(6)-(1,2-dicarboxyethyl)-AMP + GDP + phosphate + 2 H(+)</text>
        <dbReference type="Rhea" id="RHEA:15753"/>
        <dbReference type="ChEBI" id="CHEBI:15378"/>
        <dbReference type="ChEBI" id="CHEBI:29991"/>
        <dbReference type="ChEBI" id="CHEBI:37565"/>
        <dbReference type="ChEBI" id="CHEBI:43474"/>
        <dbReference type="ChEBI" id="CHEBI:57567"/>
        <dbReference type="ChEBI" id="CHEBI:58053"/>
        <dbReference type="ChEBI" id="CHEBI:58189"/>
        <dbReference type="EC" id="6.3.4.4"/>
    </reaction>
</comment>
<comment type="cofactor">
    <cofactor evidence="1">
        <name>Mg(2+)</name>
        <dbReference type="ChEBI" id="CHEBI:18420"/>
    </cofactor>
    <text evidence="1">Binds 1 Mg(2+) ion per subunit.</text>
</comment>
<comment type="pathway">
    <text evidence="1">Purine metabolism; AMP biosynthesis via de novo pathway; AMP from IMP: step 1/2.</text>
</comment>
<comment type="subunit">
    <text evidence="1">Homodimer.</text>
</comment>
<comment type="subcellular location">
    <subcellularLocation>
        <location evidence="1">Cytoplasm</location>
    </subcellularLocation>
</comment>
<comment type="similarity">
    <text evidence="1">Belongs to the adenylosuccinate synthetase family.</text>
</comment>
<reference key="1">
    <citation type="submission" date="2008-02" db="EMBL/GenBank/DDBJ databases">
        <title>Complete sequence of Haemophilus somnus 2336.</title>
        <authorList>
            <consortium name="US DOE Joint Genome Institute"/>
            <person name="Siddaramappa S."/>
            <person name="Duncan A.J."/>
            <person name="Challacombe J.F."/>
            <person name="Rainey D."/>
            <person name="Gillaspy A.F."/>
            <person name="Carson M."/>
            <person name="Gipson J."/>
            <person name="Gipson M."/>
            <person name="Bruce D."/>
            <person name="Detter J.C."/>
            <person name="Han C.S."/>
            <person name="Land M."/>
            <person name="Tapia R."/>
            <person name="Thompson L.S."/>
            <person name="Orvis J."/>
            <person name="Zaitshik J."/>
            <person name="Barnes G."/>
            <person name="Brettin T.S."/>
            <person name="Dyer D.W."/>
            <person name="Inzana T.J."/>
        </authorList>
    </citation>
    <scope>NUCLEOTIDE SEQUENCE [LARGE SCALE GENOMIC DNA]</scope>
    <source>
        <strain>2336</strain>
    </source>
</reference>